<evidence type="ECO:0000255" key="1">
    <source>
        <dbReference type="HAMAP-Rule" id="MF_00658"/>
    </source>
</evidence>
<gene>
    <name evidence="1" type="primary">rlmH</name>
    <name type="ordered locus">SynRCC307_0799</name>
</gene>
<keyword id="KW-0963">Cytoplasm</keyword>
<keyword id="KW-0489">Methyltransferase</keyword>
<keyword id="KW-1185">Reference proteome</keyword>
<keyword id="KW-0698">rRNA processing</keyword>
<keyword id="KW-0949">S-adenosyl-L-methionine</keyword>
<keyword id="KW-0808">Transferase</keyword>
<protein>
    <recommendedName>
        <fullName evidence="1">Ribosomal RNA large subunit methyltransferase H</fullName>
        <ecNumber evidence="1">2.1.1.177</ecNumber>
    </recommendedName>
    <alternativeName>
        <fullName evidence="1">23S rRNA (pseudouridine1915-N3)-methyltransferase</fullName>
    </alternativeName>
    <alternativeName>
        <fullName evidence="1">23S rRNA m3Psi1915 methyltransferase</fullName>
    </alternativeName>
    <alternativeName>
        <fullName evidence="1">rRNA (pseudouridine-N3-)-methyltransferase RlmH</fullName>
    </alternativeName>
</protein>
<organism>
    <name type="scientific">Synechococcus sp. (strain RCC307)</name>
    <dbReference type="NCBI Taxonomy" id="316278"/>
    <lineage>
        <taxon>Bacteria</taxon>
        <taxon>Bacillati</taxon>
        <taxon>Cyanobacteriota</taxon>
        <taxon>Cyanophyceae</taxon>
        <taxon>Synechococcales</taxon>
        <taxon>Synechococcaceae</taxon>
        <taxon>Synechococcus</taxon>
    </lineage>
</organism>
<accession>A5GS43</accession>
<feature type="chain" id="PRO_0000366666" description="Ribosomal RNA large subunit methyltransferase H">
    <location>
        <begin position="1"/>
        <end position="147"/>
    </location>
</feature>
<feature type="binding site" evidence="1">
    <location>
        <position position="66"/>
    </location>
    <ligand>
        <name>S-adenosyl-L-methionine</name>
        <dbReference type="ChEBI" id="CHEBI:59789"/>
    </ligand>
</feature>
<feature type="binding site" evidence="1">
    <location>
        <position position="95"/>
    </location>
    <ligand>
        <name>S-adenosyl-L-methionine</name>
        <dbReference type="ChEBI" id="CHEBI:59789"/>
    </ligand>
</feature>
<feature type="binding site" evidence="1">
    <location>
        <begin position="114"/>
        <end position="119"/>
    </location>
    <ligand>
        <name>S-adenosyl-L-methionine</name>
        <dbReference type="ChEBI" id="CHEBI:59789"/>
    </ligand>
</feature>
<proteinExistence type="inferred from homology"/>
<dbReference type="EC" id="2.1.1.177" evidence="1"/>
<dbReference type="EMBL" id="CT978603">
    <property type="protein sequence ID" value="CAK27702.1"/>
    <property type="molecule type" value="Genomic_DNA"/>
</dbReference>
<dbReference type="SMR" id="A5GS43"/>
<dbReference type="STRING" id="316278.SynRCC307_0799"/>
<dbReference type="KEGG" id="syr:SynRCC307_0799"/>
<dbReference type="eggNOG" id="COG1576">
    <property type="taxonomic scope" value="Bacteria"/>
</dbReference>
<dbReference type="HOGENOM" id="CLU_100552_1_0_3"/>
<dbReference type="Proteomes" id="UP000001115">
    <property type="component" value="Chromosome"/>
</dbReference>
<dbReference type="GO" id="GO:0005737">
    <property type="term" value="C:cytoplasm"/>
    <property type="evidence" value="ECO:0007669"/>
    <property type="project" value="UniProtKB-SubCell"/>
</dbReference>
<dbReference type="GO" id="GO:0070038">
    <property type="term" value="F:rRNA (pseudouridine-N3-)-methyltransferase activity"/>
    <property type="evidence" value="ECO:0007669"/>
    <property type="project" value="UniProtKB-UniRule"/>
</dbReference>
<dbReference type="CDD" id="cd18081">
    <property type="entry name" value="RlmH-like"/>
    <property type="match status" value="1"/>
</dbReference>
<dbReference type="Gene3D" id="3.40.1280.10">
    <property type="match status" value="1"/>
</dbReference>
<dbReference type="HAMAP" id="MF_00658">
    <property type="entry name" value="23SrRNA_methyltr_H"/>
    <property type="match status" value="1"/>
</dbReference>
<dbReference type="InterPro" id="IPR029028">
    <property type="entry name" value="Alpha/beta_knot_MTases"/>
</dbReference>
<dbReference type="InterPro" id="IPR003742">
    <property type="entry name" value="RlmH-like"/>
</dbReference>
<dbReference type="InterPro" id="IPR029026">
    <property type="entry name" value="tRNA_m1G_MTases_N"/>
</dbReference>
<dbReference type="PANTHER" id="PTHR33603">
    <property type="entry name" value="METHYLTRANSFERASE"/>
    <property type="match status" value="1"/>
</dbReference>
<dbReference type="PANTHER" id="PTHR33603:SF1">
    <property type="entry name" value="RIBOSOMAL RNA LARGE SUBUNIT METHYLTRANSFERASE H"/>
    <property type="match status" value="1"/>
</dbReference>
<dbReference type="Pfam" id="PF02590">
    <property type="entry name" value="SPOUT_MTase"/>
    <property type="match status" value="1"/>
</dbReference>
<dbReference type="PIRSF" id="PIRSF004505">
    <property type="entry name" value="MT_bac"/>
    <property type="match status" value="1"/>
</dbReference>
<dbReference type="SUPFAM" id="SSF75217">
    <property type="entry name" value="alpha/beta knot"/>
    <property type="match status" value="1"/>
</dbReference>
<reference key="1">
    <citation type="submission" date="2006-05" db="EMBL/GenBank/DDBJ databases">
        <authorList>
            <consortium name="Genoscope"/>
        </authorList>
    </citation>
    <scope>NUCLEOTIDE SEQUENCE [LARGE SCALE GENOMIC DNA]</scope>
    <source>
        <strain>RCC307</strain>
    </source>
</reference>
<comment type="function">
    <text evidence="1">Specifically methylates the pseudouridine at position 1915 (m3Psi1915) in 23S rRNA.</text>
</comment>
<comment type="catalytic activity">
    <reaction evidence="1">
        <text>pseudouridine(1915) in 23S rRNA + S-adenosyl-L-methionine = N(3)-methylpseudouridine(1915) in 23S rRNA + S-adenosyl-L-homocysteine + H(+)</text>
        <dbReference type="Rhea" id="RHEA:42752"/>
        <dbReference type="Rhea" id="RHEA-COMP:10221"/>
        <dbReference type="Rhea" id="RHEA-COMP:10222"/>
        <dbReference type="ChEBI" id="CHEBI:15378"/>
        <dbReference type="ChEBI" id="CHEBI:57856"/>
        <dbReference type="ChEBI" id="CHEBI:59789"/>
        <dbReference type="ChEBI" id="CHEBI:65314"/>
        <dbReference type="ChEBI" id="CHEBI:74486"/>
        <dbReference type="EC" id="2.1.1.177"/>
    </reaction>
</comment>
<comment type="subunit">
    <text evidence="1">Homodimer.</text>
</comment>
<comment type="subcellular location">
    <subcellularLocation>
        <location evidence="1">Cytoplasm</location>
    </subcellularLocation>
</comment>
<comment type="similarity">
    <text evidence="1">Belongs to the RNA methyltransferase RlmH family.</text>
</comment>
<sequence length="147" mass="16100">MALLQPARIRILAIGKLKRAWVAEGVAFYRKRLPGLEVVELKDSTPAKEAEAIRAARKPAERLVLLSEEGRQLSSVGLAELLGGWASERLALVIGGADGHDPTLKQQADVLLSLSELTFPHELARLMLVEQLYRASTILQGGPYHRS</sequence>
<name>RLMH_SYNR3</name>